<keyword id="KW-1185">Reference proteome</keyword>
<keyword id="KW-0687">Ribonucleoprotein</keyword>
<keyword id="KW-0689">Ribosomal protein</keyword>
<keyword id="KW-0694">RNA-binding</keyword>
<keyword id="KW-0699">rRNA-binding</keyword>
<gene>
    <name type="primary">rpsF</name>
    <name type="synonym">rps6</name>
    <name type="ordered locus">Cj1070</name>
</gene>
<proteinExistence type="inferred from homology"/>
<feature type="chain" id="PRO_0000176745" description="Small ribosomal subunit protein bS6">
    <location>
        <begin position="1"/>
        <end position="125"/>
    </location>
</feature>
<feature type="sequence conflict" description="In Ref. 1; CAA76675." evidence="2" ref="1">
    <original>T</original>
    <variation>A</variation>
    <location>
        <position position="21"/>
    </location>
</feature>
<dbReference type="EMBL" id="Y17166">
    <property type="protein sequence ID" value="CAA76675.1"/>
    <property type="molecule type" value="Genomic_DNA"/>
</dbReference>
<dbReference type="EMBL" id="AL111168">
    <property type="protein sequence ID" value="CAL35187.1"/>
    <property type="molecule type" value="Genomic_DNA"/>
</dbReference>
<dbReference type="PIR" id="A81310">
    <property type="entry name" value="A81310"/>
</dbReference>
<dbReference type="RefSeq" id="WP_002865739.1">
    <property type="nucleotide sequence ID" value="NZ_SZUC01000001.1"/>
</dbReference>
<dbReference type="RefSeq" id="YP_002344463.1">
    <property type="nucleotide sequence ID" value="NC_002163.1"/>
</dbReference>
<dbReference type="SMR" id="Q9ZAH3"/>
<dbReference type="IntAct" id="Q9ZAH3">
    <property type="interactions" value="3"/>
</dbReference>
<dbReference type="STRING" id="192222.Cj1070"/>
<dbReference type="PaxDb" id="192222-Cj1070"/>
<dbReference type="EnsemblBacteria" id="CAL35187">
    <property type="protein sequence ID" value="CAL35187"/>
    <property type="gene ID" value="Cj1070"/>
</dbReference>
<dbReference type="GeneID" id="905361"/>
<dbReference type="KEGG" id="cje:Cj1070"/>
<dbReference type="PATRIC" id="fig|192222.6.peg.1052"/>
<dbReference type="eggNOG" id="COG0360">
    <property type="taxonomic scope" value="Bacteria"/>
</dbReference>
<dbReference type="HOGENOM" id="CLU_113441_4_1_7"/>
<dbReference type="OrthoDB" id="9812702at2"/>
<dbReference type="Proteomes" id="UP000000799">
    <property type="component" value="Chromosome"/>
</dbReference>
<dbReference type="GO" id="GO:0022627">
    <property type="term" value="C:cytosolic small ribosomal subunit"/>
    <property type="evidence" value="ECO:0007669"/>
    <property type="project" value="TreeGrafter"/>
</dbReference>
<dbReference type="GO" id="GO:0070181">
    <property type="term" value="F:small ribosomal subunit rRNA binding"/>
    <property type="evidence" value="ECO:0007669"/>
    <property type="project" value="TreeGrafter"/>
</dbReference>
<dbReference type="GO" id="GO:0003735">
    <property type="term" value="F:structural constituent of ribosome"/>
    <property type="evidence" value="ECO:0007669"/>
    <property type="project" value="InterPro"/>
</dbReference>
<dbReference type="GO" id="GO:0006412">
    <property type="term" value="P:translation"/>
    <property type="evidence" value="ECO:0007669"/>
    <property type="project" value="UniProtKB-UniRule"/>
</dbReference>
<dbReference type="CDD" id="cd00473">
    <property type="entry name" value="bS6"/>
    <property type="match status" value="1"/>
</dbReference>
<dbReference type="FunFam" id="3.30.70.60:FF:000010">
    <property type="entry name" value="30S ribosomal protein S6"/>
    <property type="match status" value="1"/>
</dbReference>
<dbReference type="Gene3D" id="3.30.70.60">
    <property type="match status" value="1"/>
</dbReference>
<dbReference type="HAMAP" id="MF_00360">
    <property type="entry name" value="Ribosomal_bS6"/>
    <property type="match status" value="1"/>
</dbReference>
<dbReference type="InterPro" id="IPR000529">
    <property type="entry name" value="Ribosomal_bS6"/>
</dbReference>
<dbReference type="InterPro" id="IPR035980">
    <property type="entry name" value="Ribosomal_bS6_sf"/>
</dbReference>
<dbReference type="InterPro" id="IPR020814">
    <property type="entry name" value="Ribosomal_S6_plastid/chlpt"/>
</dbReference>
<dbReference type="InterPro" id="IPR014717">
    <property type="entry name" value="Transl_elong_EF1B/ribsomal_bS6"/>
</dbReference>
<dbReference type="NCBIfam" id="TIGR00166">
    <property type="entry name" value="S6"/>
    <property type="match status" value="1"/>
</dbReference>
<dbReference type="PANTHER" id="PTHR21011">
    <property type="entry name" value="MITOCHONDRIAL 28S RIBOSOMAL PROTEIN S6"/>
    <property type="match status" value="1"/>
</dbReference>
<dbReference type="PANTHER" id="PTHR21011:SF1">
    <property type="entry name" value="SMALL RIBOSOMAL SUBUNIT PROTEIN BS6M"/>
    <property type="match status" value="1"/>
</dbReference>
<dbReference type="Pfam" id="PF01250">
    <property type="entry name" value="Ribosomal_S6"/>
    <property type="match status" value="1"/>
</dbReference>
<dbReference type="SUPFAM" id="SSF54995">
    <property type="entry name" value="Ribosomal protein S6"/>
    <property type="match status" value="1"/>
</dbReference>
<protein>
    <recommendedName>
        <fullName evidence="2">Small ribosomal subunit protein bS6</fullName>
    </recommendedName>
    <alternativeName>
        <fullName>30S ribosomal protein S6</fullName>
    </alternativeName>
</protein>
<organism>
    <name type="scientific">Campylobacter jejuni subsp. jejuni serotype O:2 (strain ATCC 700819 / NCTC 11168)</name>
    <dbReference type="NCBI Taxonomy" id="192222"/>
    <lineage>
        <taxon>Bacteria</taxon>
        <taxon>Pseudomonadati</taxon>
        <taxon>Campylobacterota</taxon>
        <taxon>Epsilonproteobacteria</taxon>
        <taxon>Campylobacterales</taxon>
        <taxon>Campylobacteraceae</taxon>
        <taxon>Campylobacter</taxon>
    </lineage>
</organism>
<comment type="function">
    <text evidence="1">Binds together with bS18 to 16S ribosomal RNA.</text>
</comment>
<comment type="similarity">
    <text evidence="2">Belongs to the bacterial ribosomal protein bS6 family.</text>
</comment>
<name>RS6_CAMJE</name>
<sequence length="125" mass="14728">MKHYEVLFILKPTLTEEEVNTKLEFVKEVLTKNSAEIETVVPMGTRKLAYKIKKYERGTYFVIYFKAPTNLIAELERVLRITEEVIRFLIVKYENKKEIAAWEKLSHGIKQSKKEIKPLDAPEIQ</sequence>
<reference key="1">
    <citation type="journal article" date="1998" name="FEMS Microbiol. Lett.">
        <title>Cloning and expression of the Campylobacter jejuni lon gene detected by RNA arbitrarily primed PCR.</title>
        <authorList>
            <person name="Thies F.L."/>
            <person name="Hartung H.-P."/>
            <person name="Giegerich G."/>
        </authorList>
    </citation>
    <scope>NUCLEOTIDE SEQUENCE [GENOMIC DNA]</scope>
</reference>
<reference key="2">
    <citation type="journal article" date="2000" name="Nature">
        <title>The genome sequence of the food-borne pathogen Campylobacter jejuni reveals hypervariable sequences.</title>
        <authorList>
            <person name="Parkhill J."/>
            <person name="Wren B.W."/>
            <person name="Mungall K.L."/>
            <person name="Ketley J.M."/>
            <person name="Churcher C.M."/>
            <person name="Basham D."/>
            <person name="Chillingworth T."/>
            <person name="Davies R.M."/>
            <person name="Feltwell T."/>
            <person name="Holroyd S."/>
            <person name="Jagels K."/>
            <person name="Karlyshev A.V."/>
            <person name="Moule S."/>
            <person name="Pallen M.J."/>
            <person name="Penn C.W."/>
            <person name="Quail M.A."/>
            <person name="Rajandream M.A."/>
            <person name="Rutherford K.M."/>
            <person name="van Vliet A.H.M."/>
            <person name="Whitehead S."/>
            <person name="Barrell B.G."/>
        </authorList>
    </citation>
    <scope>NUCLEOTIDE SEQUENCE [LARGE SCALE GENOMIC DNA]</scope>
    <source>
        <strain>ATCC 700819 / NCTC 11168</strain>
    </source>
</reference>
<evidence type="ECO:0000250" key="1"/>
<evidence type="ECO:0000305" key="2"/>
<accession>Q9ZAH3</accession>
<accession>Q0P9I4</accession>
<accession>Q9PNM4</accession>